<sequence>MPKHYRPAGKKKEGNAAKYITRTKAVKYLQISLATFRKLCILKGVFPRDPKKKVEGNHKTYYHMKDIAFLAHDPLIEKFREIKVHRKKVKKAFAKKNKDLADRLLNRPPTYKLDRLILERYPTFVDALRDLDDCLTMVHLFAALPAVEGERVQVQRIHNCRRLSHEWQAYISRTHSLRKTFISVKGIYYQAEVQGQKITWLTPHALQQVLTDDVDFNVMLTFLEFYETLLGFINFKLYHSINVNYPPVLDPRLEALASELYALCRYMSSGRVPGNSEPAGLIEDKEGEDNKESSKTDESELRLAQLQHQLPTNEPGALMHLVQESTAADADDADAKECRSLFKNLKFYLSREVPRESLLFIIPAFGGTVSWEGEGAPFDETDEDITHQIVDRPTQSHVFLSREYVQPQWIYDCVNARIILPTEGYIVGRVPPPHLSPFVDNDAEGYIPEYAETIKRLQAAAQSQVLPLPSLGDEDMENSLVEAIIDRSESNEIADKKRKLEMLEKQYHDELRMEYEGKTFSNRTADNQPDVVDKSDTKEADDHMEDSHKQAEKDAADISKTLMSRKQRGLLQAIEINQERKKDKVNLLKKRKKNADSSASAKGR</sequence>
<comment type="function">
    <text evidence="1">Required for maturation of ribosomal RNAs and formation of the large ribosomal subunit.</text>
</comment>
<comment type="subcellular location">
    <subcellularLocation>
        <location evidence="1">Nucleus</location>
        <location evidence="1">Nucleolus</location>
    </subcellularLocation>
    <subcellularLocation>
        <location evidence="1">Nucleus</location>
        <location evidence="1">Nucleoplasm</location>
    </subcellularLocation>
</comment>
<comment type="similarity">
    <text evidence="1">Belongs to the pescadillo family.</text>
</comment>
<protein>
    <recommendedName>
        <fullName evidence="1">Pescadillo homolog</fullName>
    </recommendedName>
</protein>
<organism>
    <name type="scientific">Oryza sativa subsp. japonica</name>
    <name type="common">Rice</name>
    <dbReference type="NCBI Taxonomy" id="39947"/>
    <lineage>
        <taxon>Eukaryota</taxon>
        <taxon>Viridiplantae</taxon>
        <taxon>Streptophyta</taxon>
        <taxon>Embryophyta</taxon>
        <taxon>Tracheophyta</taxon>
        <taxon>Spermatophyta</taxon>
        <taxon>Magnoliopsida</taxon>
        <taxon>Liliopsida</taxon>
        <taxon>Poales</taxon>
        <taxon>Poaceae</taxon>
        <taxon>BOP clade</taxon>
        <taxon>Oryzoideae</taxon>
        <taxon>Oryzeae</taxon>
        <taxon>Oryzinae</taxon>
        <taxon>Oryza</taxon>
        <taxon>Oryza sativa</taxon>
    </lineage>
</organism>
<feature type="chain" id="PRO_0000437499" description="Pescadillo homolog">
    <location>
        <begin position="1"/>
        <end position="604"/>
    </location>
</feature>
<feature type="domain" description="BRCT" evidence="1">
    <location>
        <begin position="337"/>
        <end position="427"/>
    </location>
</feature>
<feature type="region of interest" description="Disordered" evidence="2">
    <location>
        <begin position="275"/>
        <end position="299"/>
    </location>
</feature>
<feature type="region of interest" description="Disordered" evidence="2">
    <location>
        <begin position="518"/>
        <end position="557"/>
    </location>
</feature>
<feature type="region of interest" description="Disordered" evidence="2">
    <location>
        <begin position="574"/>
        <end position="604"/>
    </location>
</feature>
<feature type="compositionally biased region" description="Basic and acidic residues" evidence="2">
    <location>
        <begin position="282"/>
        <end position="299"/>
    </location>
</feature>
<feature type="compositionally biased region" description="Basic and acidic residues" evidence="2">
    <location>
        <begin position="531"/>
        <end position="557"/>
    </location>
</feature>
<feature type="compositionally biased region" description="Basic and acidic residues" evidence="2">
    <location>
        <begin position="577"/>
        <end position="586"/>
    </location>
</feature>
<keyword id="KW-0539">Nucleus</keyword>
<keyword id="KW-1185">Reference proteome</keyword>
<keyword id="KW-0690">Ribosome biogenesis</keyword>
<keyword id="KW-0698">rRNA processing</keyword>
<name>PESC_ORYSJ</name>
<gene>
    <name type="primary">PES</name>
    <name evidence="5" type="ordered locus">Os03g0699200</name>
    <name evidence="4" type="ordered locus">LOC_Os03g49210</name>
    <name evidence="6" type="ORF">OsJ_12225</name>
    <name evidence="3" type="ORF">OSJNBb0017F17.15</name>
</gene>
<reference key="1">
    <citation type="journal article" date="2005" name="Genome Res.">
        <title>Sequence, annotation, and analysis of synteny between rice chromosome 3 and diverged grass species.</title>
        <authorList>
            <consortium name="The rice chromosome 3 sequencing consortium"/>
            <person name="Buell C.R."/>
            <person name="Yuan Q."/>
            <person name="Ouyang S."/>
            <person name="Liu J."/>
            <person name="Zhu W."/>
            <person name="Wang A."/>
            <person name="Maiti R."/>
            <person name="Haas B."/>
            <person name="Wortman J."/>
            <person name="Pertea M."/>
            <person name="Jones K.M."/>
            <person name="Kim M."/>
            <person name="Overton L."/>
            <person name="Tsitrin T."/>
            <person name="Fadrosh D."/>
            <person name="Bera J."/>
            <person name="Weaver B."/>
            <person name="Jin S."/>
            <person name="Johri S."/>
            <person name="Reardon M."/>
            <person name="Webb K."/>
            <person name="Hill J."/>
            <person name="Moffat K."/>
            <person name="Tallon L."/>
            <person name="Van Aken S."/>
            <person name="Lewis M."/>
            <person name="Utterback T."/>
            <person name="Feldblyum T."/>
            <person name="Zismann V."/>
            <person name="Iobst S."/>
            <person name="Hsiao J."/>
            <person name="de Vazeille A.R."/>
            <person name="Salzberg S.L."/>
            <person name="White O."/>
            <person name="Fraser C.M."/>
            <person name="Yu Y."/>
            <person name="Kim H."/>
            <person name="Rambo T."/>
            <person name="Currie J."/>
            <person name="Collura K."/>
            <person name="Kernodle-Thompson S."/>
            <person name="Wei F."/>
            <person name="Kudrna K."/>
            <person name="Ammiraju J.S.S."/>
            <person name="Luo M."/>
            <person name="Goicoechea J.L."/>
            <person name="Wing R.A."/>
            <person name="Henry D."/>
            <person name="Oates R."/>
            <person name="Palmer M."/>
            <person name="Pries G."/>
            <person name="Saski C."/>
            <person name="Simmons J."/>
            <person name="Soderlund C."/>
            <person name="Nelson W."/>
            <person name="de la Bastide M."/>
            <person name="Spiegel L."/>
            <person name="Nascimento L."/>
            <person name="Huang E."/>
            <person name="Preston R."/>
            <person name="Zutavern T."/>
            <person name="Palmer L."/>
            <person name="O'Shaughnessy A."/>
            <person name="Dike S."/>
            <person name="McCombie W.R."/>
            <person name="Minx P."/>
            <person name="Cordum H."/>
            <person name="Wilson R."/>
            <person name="Jin W."/>
            <person name="Lee H.R."/>
            <person name="Jiang J."/>
            <person name="Jackson S."/>
        </authorList>
    </citation>
    <scope>NUCLEOTIDE SEQUENCE [LARGE SCALE GENOMIC DNA]</scope>
    <source>
        <strain>cv. Nipponbare</strain>
    </source>
</reference>
<reference key="2">
    <citation type="journal article" date="2005" name="Nature">
        <title>The map-based sequence of the rice genome.</title>
        <authorList>
            <consortium name="International rice genome sequencing project (IRGSP)"/>
        </authorList>
    </citation>
    <scope>NUCLEOTIDE SEQUENCE [LARGE SCALE GENOMIC DNA]</scope>
    <source>
        <strain>cv. Nipponbare</strain>
    </source>
</reference>
<reference key="3">
    <citation type="journal article" date="2008" name="Nucleic Acids Res.">
        <title>The rice annotation project database (RAP-DB): 2008 update.</title>
        <authorList>
            <consortium name="The rice annotation project (RAP)"/>
        </authorList>
    </citation>
    <scope>GENOME REANNOTATION</scope>
    <source>
        <strain>cv. Nipponbare</strain>
    </source>
</reference>
<reference key="4">
    <citation type="journal article" date="2013" name="Rice">
        <title>Improvement of the Oryza sativa Nipponbare reference genome using next generation sequence and optical map data.</title>
        <authorList>
            <person name="Kawahara Y."/>
            <person name="de la Bastide M."/>
            <person name="Hamilton J.P."/>
            <person name="Kanamori H."/>
            <person name="McCombie W.R."/>
            <person name="Ouyang S."/>
            <person name="Schwartz D.C."/>
            <person name="Tanaka T."/>
            <person name="Wu J."/>
            <person name="Zhou S."/>
            <person name="Childs K.L."/>
            <person name="Davidson R.M."/>
            <person name="Lin H."/>
            <person name="Quesada-Ocampo L."/>
            <person name="Vaillancourt B."/>
            <person name="Sakai H."/>
            <person name="Lee S.S."/>
            <person name="Kim J."/>
            <person name="Numa H."/>
            <person name="Itoh T."/>
            <person name="Buell C.R."/>
            <person name="Matsumoto T."/>
        </authorList>
    </citation>
    <scope>GENOME REANNOTATION</scope>
    <source>
        <strain>cv. Nipponbare</strain>
    </source>
</reference>
<reference key="5">
    <citation type="journal article" date="2005" name="PLoS Biol.">
        <title>The genomes of Oryza sativa: a history of duplications.</title>
        <authorList>
            <person name="Yu J."/>
            <person name="Wang J."/>
            <person name="Lin W."/>
            <person name="Li S."/>
            <person name="Li H."/>
            <person name="Zhou J."/>
            <person name="Ni P."/>
            <person name="Dong W."/>
            <person name="Hu S."/>
            <person name="Zeng C."/>
            <person name="Zhang J."/>
            <person name="Zhang Y."/>
            <person name="Li R."/>
            <person name="Xu Z."/>
            <person name="Li S."/>
            <person name="Li X."/>
            <person name="Zheng H."/>
            <person name="Cong L."/>
            <person name="Lin L."/>
            <person name="Yin J."/>
            <person name="Geng J."/>
            <person name="Li G."/>
            <person name="Shi J."/>
            <person name="Liu J."/>
            <person name="Lv H."/>
            <person name="Li J."/>
            <person name="Wang J."/>
            <person name="Deng Y."/>
            <person name="Ran L."/>
            <person name="Shi X."/>
            <person name="Wang X."/>
            <person name="Wu Q."/>
            <person name="Li C."/>
            <person name="Ren X."/>
            <person name="Wang J."/>
            <person name="Wang X."/>
            <person name="Li D."/>
            <person name="Liu D."/>
            <person name="Zhang X."/>
            <person name="Ji Z."/>
            <person name="Zhao W."/>
            <person name="Sun Y."/>
            <person name="Zhang Z."/>
            <person name="Bao J."/>
            <person name="Han Y."/>
            <person name="Dong L."/>
            <person name="Ji J."/>
            <person name="Chen P."/>
            <person name="Wu S."/>
            <person name="Liu J."/>
            <person name="Xiao Y."/>
            <person name="Bu D."/>
            <person name="Tan J."/>
            <person name="Yang L."/>
            <person name="Ye C."/>
            <person name="Zhang J."/>
            <person name="Xu J."/>
            <person name="Zhou Y."/>
            <person name="Yu Y."/>
            <person name="Zhang B."/>
            <person name="Zhuang S."/>
            <person name="Wei H."/>
            <person name="Liu B."/>
            <person name="Lei M."/>
            <person name="Yu H."/>
            <person name="Li Y."/>
            <person name="Xu H."/>
            <person name="Wei S."/>
            <person name="He X."/>
            <person name="Fang L."/>
            <person name="Zhang Z."/>
            <person name="Zhang Y."/>
            <person name="Huang X."/>
            <person name="Su Z."/>
            <person name="Tong W."/>
            <person name="Li J."/>
            <person name="Tong Z."/>
            <person name="Li S."/>
            <person name="Ye J."/>
            <person name="Wang L."/>
            <person name="Fang L."/>
            <person name="Lei T."/>
            <person name="Chen C.-S."/>
            <person name="Chen H.-C."/>
            <person name="Xu Z."/>
            <person name="Li H."/>
            <person name="Huang H."/>
            <person name="Zhang F."/>
            <person name="Xu H."/>
            <person name="Li N."/>
            <person name="Zhao C."/>
            <person name="Li S."/>
            <person name="Dong L."/>
            <person name="Huang Y."/>
            <person name="Li L."/>
            <person name="Xi Y."/>
            <person name="Qi Q."/>
            <person name="Li W."/>
            <person name="Zhang B."/>
            <person name="Hu W."/>
            <person name="Zhang Y."/>
            <person name="Tian X."/>
            <person name="Jiao Y."/>
            <person name="Liang X."/>
            <person name="Jin J."/>
            <person name="Gao L."/>
            <person name="Zheng W."/>
            <person name="Hao B."/>
            <person name="Liu S.-M."/>
            <person name="Wang W."/>
            <person name="Yuan L."/>
            <person name="Cao M."/>
            <person name="McDermott J."/>
            <person name="Samudrala R."/>
            <person name="Wang J."/>
            <person name="Wong G.K.-S."/>
            <person name="Yang H."/>
        </authorList>
    </citation>
    <scope>NUCLEOTIDE SEQUENCE [LARGE SCALE GENOMIC DNA]</scope>
    <source>
        <strain>cv. Nipponbare</strain>
    </source>
</reference>
<reference key="6">
    <citation type="journal article" date="2003" name="Science">
        <title>Collection, mapping, and annotation of over 28,000 cDNA clones from japonica rice.</title>
        <authorList>
            <consortium name="The rice full-length cDNA consortium"/>
        </authorList>
    </citation>
    <scope>NUCLEOTIDE SEQUENCE [LARGE SCALE MRNA]</scope>
    <source>
        <strain>cv. Nipponbare</strain>
    </source>
</reference>
<accession>Q851S7</accession>
<evidence type="ECO:0000255" key="1">
    <source>
        <dbReference type="HAMAP-Rule" id="MF_03028"/>
    </source>
</evidence>
<evidence type="ECO:0000256" key="2">
    <source>
        <dbReference type="SAM" id="MobiDB-lite"/>
    </source>
</evidence>
<evidence type="ECO:0000312" key="3">
    <source>
        <dbReference type="EMBL" id="AAO38454.1"/>
    </source>
</evidence>
<evidence type="ECO:0000312" key="4">
    <source>
        <dbReference type="EMBL" id="ABF98376.1"/>
    </source>
</evidence>
<evidence type="ECO:0000312" key="5">
    <source>
        <dbReference type="EMBL" id="BAG90069.1"/>
    </source>
</evidence>
<evidence type="ECO:0000312" key="6">
    <source>
        <dbReference type="EMBL" id="EAZ28253.1"/>
    </source>
</evidence>
<dbReference type="EMBL" id="AC097368">
    <property type="protein sequence ID" value="AAO38454.1"/>
    <property type="molecule type" value="Genomic_DNA"/>
</dbReference>
<dbReference type="EMBL" id="DP000009">
    <property type="protein sequence ID" value="ABF98376.1"/>
    <property type="molecule type" value="Genomic_DNA"/>
</dbReference>
<dbReference type="EMBL" id="AP008209">
    <property type="protein sequence ID" value="BAF12900.1"/>
    <property type="molecule type" value="Genomic_DNA"/>
</dbReference>
<dbReference type="EMBL" id="AP014959">
    <property type="protein sequence ID" value="BAS85903.1"/>
    <property type="molecule type" value="Genomic_DNA"/>
</dbReference>
<dbReference type="EMBL" id="CM000140">
    <property type="protein sequence ID" value="EAZ28253.1"/>
    <property type="molecule type" value="Genomic_DNA"/>
</dbReference>
<dbReference type="EMBL" id="AK066652">
    <property type="protein sequence ID" value="BAG90069.1"/>
    <property type="molecule type" value="mRNA"/>
</dbReference>
<dbReference type="RefSeq" id="XP_015631171.1">
    <property type="nucleotide sequence ID" value="XM_015775685.1"/>
</dbReference>
<dbReference type="SMR" id="Q851S7"/>
<dbReference type="FunCoup" id="Q851S7">
    <property type="interactions" value="3010"/>
</dbReference>
<dbReference type="STRING" id="39947.Q851S7"/>
<dbReference type="PaxDb" id="39947-Q851S7"/>
<dbReference type="EnsemblPlants" id="Os03t0699200-01">
    <property type="protein sequence ID" value="Os03t0699200-01"/>
    <property type="gene ID" value="Os03g0699200"/>
</dbReference>
<dbReference type="Gramene" id="Os03t0699200-01">
    <property type="protein sequence ID" value="Os03t0699200-01"/>
    <property type="gene ID" value="Os03g0699200"/>
</dbReference>
<dbReference type="KEGG" id="dosa:Os03g0699200"/>
<dbReference type="eggNOG" id="KOG2481">
    <property type="taxonomic scope" value="Eukaryota"/>
</dbReference>
<dbReference type="HOGENOM" id="CLU_019619_2_0_1"/>
<dbReference type="InParanoid" id="Q851S7"/>
<dbReference type="OMA" id="QKVTWIV"/>
<dbReference type="OrthoDB" id="10264910at2759"/>
<dbReference type="Proteomes" id="UP000000763">
    <property type="component" value="Chromosome 3"/>
</dbReference>
<dbReference type="Proteomes" id="UP000007752">
    <property type="component" value="Chromosome 3"/>
</dbReference>
<dbReference type="Proteomes" id="UP000059680">
    <property type="component" value="Chromosome 3"/>
</dbReference>
<dbReference type="GO" id="GO:0005654">
    <property type="term" value="C:nucleoplasm"/>
    <property type="evidence" value="ECO:0007669"/>
    <property type="project" value="UniProtKB-SubCell"/>
</dbReference>
<dbReference type="GO" id="GO:0070545">
    <property type="term" value="C:PeBoW complex"/>
    <property type="evidence" value="ECO:0000318"/>
    <property type="project" value="GO_Central"/>
</dbReference>
<dbReference type="GO" id="GO:0030687">
    <property type="term" value="C:preribosome, large subunit precursor"/>
    <property type="evidence" value="ECO:0007669"/>
    <property type="project" value="UniProtKB-UniRule"/>
</dbReference>
<dbReference type="GO" id="GO:0003729">
    <property type="term" value="F:mRNA binding"/>
    <property type="evidence" value="ECO:0007669"/>
    <property type="project" value="EnsemblPlants"/>
</dbReference>
<dbReference type="GO" id="GO:0043021">
    <property type="term" value="F:ribonucleoprotein complex binding"/>
    <property type="evidence" value="ECO:0007669"/>
    <property type="project" value="UniProtKB-UniRule"/>
</dbReference>
<dbReference type="GO" id="GO:0003723">
    <property type="term" value="F:RNA binding"/>
    <property type="evidence" value="ECO:0000318"/>
    <property type="project" value="GO_Central"/>
</dbReference>
<dbReference type="GO" id="GO:0000466">
    <property type="term" value="P:maturation of 5.8S rRNA from tricistronic rRNA transcript (SSU-rRNA, 5.8S rRNA, LSU-rRNA)"/>
    <property type="evidence" value="ECO:0007669"/>
    <property type="project" value="UniProtKB-UniRule"/>
</dbReference>
<dbReference type="GO" id="GO:0000463">
    <property type="term" value="P:maturation of LSU-rRNA from tricistronic rRNA transcript (SSU-rRNA, 5.8S rRNA, LSU-rRNA)"/>
    <property type="evidence" value="ECO:0000318"/>
    <property type="project" value="GO_Central"/>
</dbReference>
<dbReference type="GO" id="GO:2000232">
    <property type="term" value="P:regulation of rRNA processing"/>
    <property type="evidence" value="ECO:0007669"/>
    <property type="project" value="EnsemblPlants"/>
</dbReference>
<dbReference type="CDD" id="cd17709">
    <property type="entry name" value="BRCT_pescadillo_like"/>
    <property type="match status" value="1"/>
</dbReference>
<dbReference type="FunFam" id="3.40.50.10190:FF:000002">
    <property type="entry name" value="Pescadillo homolog"/>
    <property type="match status" value="1"/>
</dbReference>
<dbReference type="Gene3D" id="3.40.50.10190">
    <property type="entry name" value="BRCT domain"/>
    <property type="match status" value="1"/>
</dbReference>
<dbReference type="HAMAP" id="MF_03028">
    <property type="entry name" value="Pescadillo"/>
    <property type="match status" value="1"/>
</dbReference>
<dbReference type="InterPro" id="IPR001357">
    <property type="entry name" value="BRCT_dom"/>
</dbReference>
<dbReference type="InterPro" id="IPR036420">
    <property type="entry name" value="BRCT_dom_sf"/>
</dbReference>
<dbReference type="InterPro" id="IPR010613">
    <property type="entry name" value="PES"/>
</dbReference>
<dbReference type="PANTHER" id="PTHR12221">
    <property type="entry name" value="PESCADILLO - RELATED"/>
    <property type="match status" value="1"/>
</dbReference>
<dbReference type="PANTHER" id="PTHR12221:SF6">
    <property type="entry name" value="PESCADILLO HOMOLOG"/>
    <property type="match status" value="1"/>
</dbReference>
<dbReference type="Pfam" id="PF16589">
    <property type="entry name" value="BRCT_2"/>
    <property type="match status" value="1"/>
</dbReference>
<dbReference type="Pfam" id="PF06732">
    <property type="entry name" value="Pescadillo_N"/>
    <property type="match status" value="1"/>
</dbReference>
<dbReference type="SMART" id="SM00292">
    <property type="entry name" value="BRCT"/>
    <property type="match status" value="1"/>
</dbReference>
<dbReference type="SUPFAM" id="SSF52113">
    <property type="entry name" value="BRCT domain"/>
    <property type="match status" value="1"/>
</dbReference>
<dbReference type="PROSITE" id="PS50172">
    <property type="entry name" value="BRCT"/>
    <property type="match status" value="1"/>
</dbReference>
<proteinExistence type="evidence at transcript level"/>